<keyword id="KW-0413">Isomerase</keyword>
<keyword id="KW-0819">tRNA processing</keyword>
<organism>
    <name type="scientific">Chlorobium phaeovibrioides (strain DSM 265 / 1930)</name>
    <name type="common">Prosthecochloris vibrioformis (strain DSM 265)</name>
    <dbReference type="NCBI Taxonomy" id="290318"/>
    <lineage>
        <taxon>Bacteria</taxon>
        <taxon>Pseudomonadati</taxon>
        <taxon>Chlorobiota</taxon>
        <taxon>Chlorobiia</taxon>
        <taxon>Chlorobiales</taxon>
        <taxon>Chlorobiaceae</taxon>
        <taxon>Chlorobium/Pelodictyon group</taxon>
        <taxon>Chlorobium</taxon>
    </lineage>
</organism>
<dbReference type="EC" id="5.4.99.12" evidence="1"/>
<dbReference type="EMBL" id="CP000607">
    <property type="protein sequence ID" value="ABP36796.1"/>
    <property type="molecule type" value="Genomic_DNA"/>
</dbReference>
<dbReference type="SMR" id="A4SE87"/>
<dbReference type="STRING" id="290318.Cvib_0781"/>
<dbReference type="KEGG" id="pvi:Cvib_0781"/>
<dbReference type="eggNOG" id="COG0101">
    <property type="taxonomic scope" value="Bacteria"/>
</dbReference>
<dbReference type="HOGENOM" id="CLU_014673_0_1_10"/>
<dbReference type="OrthoDB" id="9811823at2"/>
<dbReference type="GO" id="GO:0003723">
    <property type="term" value="F:RNA binding"/>
    <property type="evidence" value="ECO:0007669"/>
    <property type="project" value="InterPro"/>
</dbReference>
<dbReference type="GO" id="GO:0160147">
    <property type="term" value="F:tRNA pseudouridine(38-40) synthase activity"/>
    <property type="evidence" value="ECO:0007669"/>
    <property type="project" value="UniProtKB-EC"/>
</dbReference>
<dbReference type="GO" id="GO:0031119">
    <property type="term" value="P:tRNA pseudouridine synthesis"/>
    <property type="evidence" value="ECO:0007669"/>
    <property type="project" value="UniProtKB-UniRule"/>
</dbReference>
<dbReference type="CDD" id="cd02570">
    <property type="entry name" value="PseudoU_synth_EcTruA"/>
    <property type="match status" value="1"/>
</dbReference>
<dbReference type="FunFam" id="3.30.70.580:FF:000001">
    <property type="entry name" value="tRNA pseudouridine synthase A"/>
    <property type="match status" value="1"/>
</dbReference>
<dbReference type="Gene3D" id="3.30.70.660">
    <property type="entry name" value="Pseudouridine synthase I, catalytic domain, C-terminal subdomain"/>
    <property type="match status" value="1"/>
</dbReference>
<dbReference type="Gene3D" id="3.30.70.580">
    <property type="entry name" value="Pseudouridine synthase I, catalytic domain, N-terminal subdomain"/>
    <property type="match status" value="1"/>
</dbReference>
<dbReference type="HAMAP" id="MF_00171">
    <property type="entry name" value="TruA"/>
    <property type="match status" value="1"/>
</dbReference>
<dbReference type="InterPro" id="IPR020103">
    <property type="entry name" value="PsdUridine_synth_cat_dom_sf"/>
</dbReference>
<dbReference type="InterPro" id="IPR001406">
    <property type="entry name" value="PsdUridine_synth_TruA"/>
</dbReference>
<dbReference type="InterPro" id="IPR020097">
    <property type="entry name" value="PsdUridine_synth_TruA_a/b_dom"/>
</dbReference>
<dbReference type="InterPro" id="IPR020095">
    <property type="entry name" value="PsdUridine_synth_TruA_C"/>
</dbReference>
<dbReference type="InterPro" id="IPR020094">
    <property type="entry name" value="TruA/RsuA/RluB/E/F_N"/>
</dbReference>
<dbReference type="NCBIfam" id="TIGR00071">
    <property type="entry name" value="hisT_truA"/>
    <property type="match status" value="1"/>
</dbReference>
<dbReference type="PANTHER" id="PTHR11142">
    <property type="entry name" value="PSEUDOURIDYLATE SYNTHASE"/>
    <property type="match status" value="1"/>
</dbReference>
<dbReference type="PANTHER" id="PTHR11142:SF0">
    <property type="entry name" value="TRNA PSEUDOURIDINE SYNTHASE-LIKE 1"/>
    <property type="match status" value="1"/>
</dbReference>
<dbReference type="Pfam" id="PF01416">
    <property type="entry name" value="PseudoU_synth_1"/>
    <property type="match status" value="2"/>
</dbReference>
<dbReference type="PIRSF" id="PIRSF001430">
    <property type="entry name" value="tRNA_psdUrid_synth"/>
    <property type="match status" value="1"/>
</dbReference>
<dbReference type="SUPFAM" id="SSF55120">
    <property type="entry name" value="Pseudouridine synthase"/>
    <property type="match status" value="1"/>
</dbReference>
<protein>
    <recommendedName>
        <fullName evidence="1">tRNA pseudouridine synthase A</fullName>
        <ecNumber evidence="1">5.4.99.12</ecNumber>
    </recommendedName>
    <alternativeName>
        <fullName evidence="1">tRNA pseudouridine(38-40) synthase</fullName>
    </alternativeName>
    <alternativeName>
        <fullName evidence="1">tRNA pseudouridylate synthase I</fullName>
    </alternativeName>
    <alternativeName>
        <fullName evidence="1">tRNA-uridine isomerase I</fullName>
    </alternativeName>
</protein>
<proteinExistence type="inferred from homology"/>
<evidence type="ECO:0000255" key="1">
    <source>
        <dbReference type="HAMAP-Rule" id="MF_00171"/>
    </source>
</evidence>
<name>TRUA_CHLPM</name>
<accession>A4SE87</accession>
<feature type="chain" id="PRO_1000097771" description="tRNA pseudouridine synthase A">
    <location>
        <begin position="1"/>
        <end position="243"/>
    </location>
</feature>
<feature type="active site" description="Nucleophile" evidence="1">
    <location>
        <position position="53"/>
    </location>
</feature>
<feature type="binding site" evidence="1">
    <location>
        <position position="111"/>
    </location>
    <ligand>
        <name>substrate</name>
    </ligand>
</feature>
<comment type="function">
    <text evidence="1">Formation of pseudouridine at positions 38, 39 and 40 in the anticodon stem and loop of transfer RNAs.</text>
</comment>
<comment type="catalytic activity">
    <reaction evidence="1">
        <text>uridine(38/39/40) in tRNA = pseudouridine(38/39/40) in tRNA</text>
        <dbReference type="Rhea" id="RHEA:22376"/>
        <dbReference type="Rhea" id="RHEA-COMP:10085"/>
        <dbReference type="Rhea" id="RHEA-COMP:10087"/>
        <dbReference type="ChEBI" id="CHEBI:65314"/>
        <dbReference type="ChEBI" id="CHEBI:65315"/>
        <dbReference type="EC" id="5.4.99.12"/>
    </reaction>
</comment>
<comment type="subunit">
    <text evidence="1">Homodimer.</text>
</comment>
<comment type="similarity">
    <text evidence="1">Belongs to the tRNA pseudouridine synthase TruA family.</text>
</comment>
<reference key="1">
    <citation type="submission" date="2007-03" db="EMBL/GenBank/DDBJ databases">
        <title>Complete sequence of Prosthecochloris vibrioformis DSM 265.</title>
        <authorList>
            <consortium name="US DOE Joint Genome Institute"/>
            <person name="Copeland A."/>
            <person name="Lucas S."/>
            <person name="Lapidus A."/>
            <person name="Barry K."/>
            <person name="Detter J.C."/>
            <person name="Glavina del Rio T."/>
            <person name="Hammon N."/>
            <person name="Israni S."/>
            <person name="Pitluck S."/>
            <person name="Schmutz J."/>
            <person name="Larimer F."/>
            <person name="Land M."/>
            <person name="Hauser L."/>
            <person name="Mikhailova N."/>
            <person name="Li T."/>
            <person name="Overmann J."/>
            <person name="Schuster S.C."/>
            <person name="Bryant D.A."/>
            <person name="Richardson P."/>
        </authorList>
    </citation>
    <scope>NUCLEOTIDE SEQUENCE [LARGE SCALE GENOMIC DNA]</scope>
    <source>
        <strain>DSM 265 / 1930</strain>
    </source>
</reference>
<sequence>MPNIRLDVEYDGTSFAGWQRQPNGIVTVQGEIEAVLSEILQEKINLAAAGRTDRGVHARGQVVNFSTRSPLEHSRIRHSLNCLLPSSICIPSSQLVPDDFHARFSALERQYRYFAIPEPSALMGRYTGCSHGDVDFALMQHLSSGLRGTHDFSLFSREDRDGNGSLCTVREAGWYRHKGVMVFHIAANRFLRSMVRGIVGGMLSAGRGELDPEEYLGMLGGGGGGMRVKPAVASGLFLWRVRY</sequence>
<gene>
    <name evidence="1" type="primary">truA</name>
    <name type="ordered locus">Cvib_0781</name>
</gene>